<accession>B2IQZ3</accession>
<gene>
    <name evidence="1" type="primary">pth</name>
    <name type="ordered locus">SPCG_0005</name>
</gene>
<protein>
    <recommendedName>
        <fullName evidence="1">Peptidyl-tRNA hydrolase</fullName>
        <shortName evidence="1">Pth</shortName>
        <ecNumber evidence="1">3.1.1.29</ecNumber>
    </recommendedName>
</protein>
<comment type="function">
    <text evidence="1">Hydrolyzes ribosome-free peptidyl-tRNAs (with 1 or more amino acids incorporated), which drop off the ribosome during protein synthesis, or as a result of ribosome stalling.</text>
</comment>
<comment type="function">
    <text evidence="1">Catalyzes the release of premature peptidyl moieties from peptidyl-tRNA molecules trapped in stalled 50S ribosomal subunits, and thus maintains levels of free tRNAs and 50S ribosomes.</text>
</comment>
<comment type="catalytic activity">
    <reaction evidence="1">
        <text>an N-acyl-L-alpha-aminoacyl-tRNA + H2O = an N-acyl-L-amino acid + a tRNA + H(+)</text>
        <dbReference type="Rhea" id="RHEA:54448"/>
        <dbReference type="Rhea" id="RHEA-COMP:10123"/>
        <dbReference type="Rhea" id="RHEA-COMP:13883"/>
        <dbReference type="ChEBI" id="CHEBI:15377"/>
        <dbReference type="ChEBI" id="CHEBI:15378"/>
        <dbReference type="ChEBI" id="CHEBI:59874"/>
        <dbReference type="ChEBI" id="CHEBI:78442"/>
        <dbReference type="ChEBI" id="CHEBI:138191"/>
        <dbReference type="EC" id="3.1.1.29"/>
    </reaction>
</comment>
<comment type="subunit">
    <text evidence="1">Monomer.</text>
</comment>
<comment type="subcellular location">
    <subcellularLocation>
        <location evidence="1">Cytoplasm</location>
    </subcellularLocation>
</comment>
<comment type="similarity">
    <text evidence="1">Belongs to the PTH family.</text>
</comment>
<feature type="chain" id="PRO_1000092993" description="Peptidyl-tRNA hydrolase">
    <location>
        <begin position="1"/>
        <end position="189"/>
    </location>
</feature>
<feature type="active site" description="Proton acceptor" evidence="1">
    <location>
        <position position="20"/>
    </location>
</feature>
<feature type="binding site" evidence="1">
    <location>
        <position position="15"/>
    </location>
    <ligand>
        <name>tRNA</name>
        <dbReference type="ChEBI" id="CHEBI:17843"/>
    </ligand>
</feature>
<feature type="binding site" evidence="1">
    <location>
        <position position="66"/>
    </location>
    <ligand>
        <name>tRNA</name>
        <dbReference type="ChEBI" id="CHEBI:17843"/>
    </ligand>
</feature>
<feature type="binding site" evidence="1">
    <location>
        <position position="68"/>
    </location>
    <ligand>
        <name>tRNA</name>
        <dbReference type="ChEBI" id="CHEBI:17843"/>
    </ligand>
</feature>
<feature type="binding site" evidence="1">
    <location>
        <position position="114"/>
    </location>
    <ligand>
        <name>tRNA</name>
        <dbReference type="ChEBI" id="CHEBI:17843"/>
    </ligand>
</feature>
<feature type="site" description="Discriminates between blocked and unblocked aminoacyl-tRNA" evidence="1">
    <location>
        <position position="10"/>
    </location>
</feature>
<feature type="site" description="Stabilizes the basic form of H active site to accept a proton" evidence="1">
    <location>
        <position position="93"/>
    </location>
</feature>
<keyword id="KW-0963">Cytoplasm</keyword>
<keyword id="KW-0378">Hydrolase</keyword>
<keyword id="KW-0694">RNA-binding</keyword>
<keyword id="KW-0820">tRNA-binding</keyword>
<reference key="1">
    <citation type="journal article" date="2009" name="BMC Genomics">
        <title>Genome evolution driven by host adaptations results in a more virulent and antimicrobial-resistant Streptococcus pneumoniae serotype 14.</title>
        <authorList>
            <person name="Ding F."/>
            <person name="Tang P."/>
            <person name="Hsu M.-H."/>
            <person name="Cui P."/>
            <person name="Hu S."/>
            <person name="Yu J."/>
            <person name="Chiu C.-H."/>
        </authorList>
    </citation>
    <scope>NUCLEOTIDE SEQUENCE [LARGE SCALE GENOMIC DNA]</scope>
    <source>
        <strain>CGSP14</strain>
    </source>
</reference>
<proteinExistence type="inferred from homology"/>
<organism>
    <name type="scientific">Streptococcus pneumoniae (strain CGSP14)</name>
    <dbReference type="NCBI Taxonomy" id="516950"/>
    <lineage>
        <taxon>Bacteria</taxon>
        <taxon>Bacillati</taxon>
        <taxon>Bacillota</taxon>
        <taxon>Bacilli</taxon>
        <taxon>Lactobacillales</taxon>
        <taxon>Streptococcaceae</taxon>
        <taxon>Streptococcus</taxon>
    </lineage>
</organism>
<evidence type="ECO:0000255" key="1">
    <source>
        <dbReference type="HAMAP-Rule" id="MF_00083"/>
    </source>
</evidence>
<name>PTH_STRPS</name>
<dbReference type="EC" id="3.1.1.29" evidence="1"/>
<dbReference type="EMBL" id="CP001033">
    <property type="protein sequence ID" value="ACB89257.1"/>
    <property type="molecule type" value="Genomic_DNA"/>
</dbReference>
<dbReference type="RefSeq" id="WP_000163928.1">
    <property type="nucleotide sequence ID" value="NC_010582.1"/>
</dbReference>
<dbReference type="SMR" id="B2IQZ3"/>
<dbReference type="KEGG" id="spw:SPCG_0005"/>
<dbReference type="HOGENOM" id="CLU_062456_4_1_9"/>
<dbReference type="GO" id="GO:0005737">
    <property type="term" value="C:cytoplasm"/>
    <property type="evidence" value="ECO:0007669"/>
    <property type="project" value="UniProtKB-SubCell"/>
</dbReference>
<dbReference type="GO" id="GO:0004045">
    <property type="term" value="F:peptidyl-tRNA hydrolase activity"/>
    <property type="evidence" value="ECO:0007669"/>
    <property type="project" value="UniProtKB-UniRule"/>
</dbReference>
<dbReference type="GO" id="GO:0000049">
    <property type="term" value="F:tRNA binding"/>
    <property type="evidence" value="ECO:0007669"/>
    <property type="project" value="UniProtKB-UniRule"/>
</dbReference>
<dbReference type="GO" id="GO:0006515">
    <property type="term" value="P:protein quality control for misfolded or incompletely synthesized proteins"/>
    <property type="evidence" value="ECO:0007669"/>
    <property type="project" value="UniProtKB-UniRule"/>
</dbReference>
<dbReference type="GO" id="GO:0072344">
    <property type="term" value="P:rescue of stalled ribosome"/>
    <property type="evidence" value="ECO:0007669"/>
    <property type="project" value="UniProtKB-UniRule"/>
</dbReference>
<dbReference type="CDD" id="cd00462">
    <property type="entry name" value="PTH"/>
    <property type="match status" value="1"/>
</dbReference>
<dbReference type="FunFam" id="3.40.50.1470:FF:000001">
    <property type="entry name" value="Peptidyl-tRNA hydrolase"/>
    <property type="match status" value="1"/>
</dbReference>
<dbReference type="Gene3D" id="3.40.50.1470">
    <property type="entry name" value="Peptidyl-tRNA hydrolase"/>
    <property type="match status" value="1"/>
</dbReference>
<dbReference type="HAMAP" id="MF_00083">
    <property type="entry name" value="Pept_tRNA_hydro_bact"/>
    <property type="match status" value="1"/>
</dbReference>
<dbReference type="InterPro" id="IPR001328">
    <property type="entry name" value="Pept_tRNA_hydro"/>
</dbReference>
<dbReference type="InterPro" id="IPR018171">
    <property type="entry name" value="Pept_tRNA_hydro_CS"/>
</dbReference>
<dbReference type="InterPro" id="IPR036416">
    <property type="entry name" value="Pept_tRNA_hydro_sf"/>
</dbReference>
<dbReference type="NCBIfam" id="TIGR00447">
    <property type="entry name" value="pth"/>
    <property type="match status" value="1"/>
</dbReference>
<dbReference type="PANTHER" id="PTHR17224">
    <property type="entry name" value="PEPTIDYL-TRNA HYDROLASE"/>
    <property type="match status" value="1"/>
</dbReference>
<dbReference type="PANTHER" id="PTHR17224:SF1">
    <property type="entry name" value="PEPTIDYL-TRNA HYDROLASE"/>
    <property type="match status" value="1"/>
</dbReference>
<dbReference type="Pfam" id="PF01195">
    <property type="entry name" value="Pept_tRNA_hydro"/>
    <property type="match status" value="1"/>
</dbReference>
<dbReference type="SUPFAM" id="SSF53178">
    <property type="entry name" value="Peptidyl-tRNA hydrolase-like"/>
    <property type="match status" value="1"/>
</dbReference>
<dbReference type="PROSITE" id="PS01195">
    <property type="entry name" value="PEPT_TRNA_HYDROL_1"/>
    <property type="match status" value="1"/>
</dbReference>
<dbReference type="PROSITE" id="PS01196">
    <property type="entry name" value="PEPT_TRNA_HYDROL_2"/>
    <property type="match status" value="1"/>
</dbReference>
<sequence>MTKLLVGLGNPGDKYFETKHNVGFMLIDQLAKKQNVTFTHDKIFQADLASFFLNGEKIYLVKPTTFMNESGKAVHALLTYYGLDIDDLLIIYDDLDMEVGKIRLRAKGSAGGHNGIKSIIQHIGTHVFNRVKIGIGRPKNGMSVVHHVLSKFDRDDYIGILQSVDKVDDSVNYYLQEKNFEKTMQRYNG</sequence>